<dbReference type="EMBL" id="CP000409">
    <property type="protein sequence ID" value="ABV73630.1"/>
    <property type="molecule type" value="Genomic_DNA"/>
</dbReference>
<dbReference type="RefSeq" id="WP_012148825.1">
    <property type="nucleotide sequence ID" value="NC_009879.1"/>
</dbReference>
<dbReference type="SMR" id="A8EZ47"/>
<dbReference type="STRING" id="293613.A1E_03475"/>
<dbReference type="KEGG" id="rcm:A1E_03475"/>
<dbReference type="eggNOG" id="COG0632">
    <property type="taxonomic scope" value="Bacteria"/>
</dbReference>
<dbReference type="HOGENOM" id="CLU_087936_3_0_5"/>
<dbReference type="Proteomes" id="UP000007056">
    <property type="component" value="Chromosome"/>
</dbReference>
<dbReference type="GO" id="GO:0005737">
    <property type="term" value="C:cytoplasm"/>
    <property type="evidence" value="ECO:0007669"/>
    <property type="project" value="UniProtKB-SubCell"/>
</dbReference>
<dbReference type="GO" id="GO:0009379">
    <property type="term" value="C:Holliday junction helicase complex"/>
    <property type="evidence" value="ECO:0007669"/>
    <property type="project" value="InterPro"/>
</dbReference>
<dbReference type="GO" id="GO:0048476">
    <property type="term" value="C:Holliday junction resolvase complex"/>
    <property type="evidence" value="ECO:0007669"/>
    <property type="project" value="UniProtKB-UniRule"/>
</dbReference>
<dbReference type="GO" id="GO:0005524">
    <property type="term" value="F:ATP binding"/>
    <property type="evidence" value="ECO:0007669"/>
    <property type="project" value="InterPro"/>
</dbReference>
<dbReference type="GO" id="GO:0000400">
    <property type="term" value="F:four-way junction DNA binding"/>
    <property type="evidence" value="ECO:0007669"/>
    <property type="project" value="UniProtKB-UniRule"/>
</dbReference>
<dbReference type="GO" id="GO:0009378">
    <property type="term" value="F:four-way junction helicase activity"/>
    <property type="evidence" value="ECO:0007669"/>
    <property type="project" value="InterPro"/>
</dbReference>
<dbReference type="GO" id="GO:0006310">
    <property type="term" value="P:DNA recombination"/>
    <property type="evidence" value="ECO:0007669"/>
    <property type="project" value="UniProtKB-UniRule"/>
</dbReference>
<dbReference type="GO" id="GO:0006281">
    <property type="term" value="P:DNA repair"/>
    <property type="evidence" value="ECO:0007669"/>
    <property type="project" value="UniProtKB-UniRule"/>
</dbReference>
<dbReference type="CDD" id="cd14332">
    <property type="entry name" value="UBA_RuvA_C"/>
    <property type="match status" value="1"/>
</dbReference>
<dbReference type="Gene3D" id="1.10.150.20">
    <property type="entry name" value="5' to 3' exonuclease, C-terminal subdomain"/>
    <property type="match status" value="1"/>
</dbReference>
<dbReference type="Gene3D" id="1.10.8.10">
    <property type="entry name" value="DNA helicase RuvA subunit, C-terminal domain"/>
    <property type="match status" value="1"/>
</dbReference>
<dbReference type="Gene3D" id="2.40.50.140">
    <property type="entry name" value="Nucleic acid-binding proteins"/>
    <property type="match status" value="1"/>
</dbReference>
<dbReference type="HAMAP" id="MF_00031">
    <property type="entry name" value="DNA_HJ_migration_RuvA"/>
    <property type="match status" value="1"/>
</dbReference>
<dbReference type="InterPro" id="IPR013849">
    <property type="entry name" value="DNA_helicase_Holl-junc_RuvA_I"/>
</dbReference>
<dbReference type="InterPro" id="IPR003583">
    <property type="entry name" value="Hlx-hairpin-Hlx_DNA-bd_motif"/>
</dbReference>
<dbReference type="InterPro" id="IPR012340">
    <property type="entry name" value="NA-bd_OB-fold"/>
</dbReference>
<dbReference type="InterPro" id="IPR000085">
    <property type="entry name" value="RuvA"/>
</dbReference>
<dbReference type="InterPro" id="IPR010994">
    <property type="entry name" value="RuvA_2-like"/>
</dbReference>
<dbReference type="InterPro" id="IPR011114">
    <property type="entry name" value="RuvA_C"/>
</dbReference>
<dbReference type="InterPro" id="IPR036267">
    <property type="entry name" value="RuvA_C_sf"/>
</dbReference>
<dbReference type="NCBIfam" id="TIGR00084">
    <property type="entry name" value="ruvA"/>
    <property type="match status" value="1"/>
</dbReference>
<dbReference type="Pfam" id="PF14520">
    <property type="entry name" value="HHH_5"/>
    <property type="match status" value="1"/>
</dbReference>
<dbReference type="Pfam" id="PF07499">
    <property type="entry name" value="RuvA_C"/>
    <property type="match status" value="1"/>
</dbReference>
<dbReference type="Pfam" id="PF01330">
    <property type="entry name" value="RuvA_N"/>
    <property type="match status" value="1"/>
</dbReference>
<dbReference type="SMART" id="SM00278">
    <property type="entry name" value="HhH1"/>
    <property type="match status" value="2"/>
</dbReference>
<dbReference type="SUPFAM" id="SSF46929">
    <property type="entry name" value="DNA helicase RuvA subunit, C-terminal domain"/>
    <property type="match status" value="1"/>
</dbReference>
<dbReference type="SUPFAM" id="SSF50249">
    <property type="entry name" value="Nucleic acid-binding proteins"/>
    <property type="match status" value="1"/>
</dbReference>
<dbReference type="SUPFAM" id="SSF47781">
    <property type="entry name" value="RuvA domain 2-like"/>
    <property type="match status" value="1"/>
</dbReference>
<accession>A8EZ47</accession>
<feature type="chain" id="PRO_1000002537" description="Holliday junction branch migration complex subunit RuvA">
    <location>
        <begin position="1"/>
        <end position="204"/>
    </location>
</feature>
<feature type="region of interest" description="Domain I" evidence="1">
    <location>
        <begin position="1"/>
        <end position="63"/>
    </location>
</feature>
<feature type="region of interest" description="Domain II" evidence="1">
    <location>
        <begin position="64"/>
        <end position="142"/>
    </location>
</feature>
<feature type="region of interest" description="Flexible linker" evidence="1">
    <location>
        <begin position="143"/>
        <end position="153"/>
    </location>
</feature>
<feature type="region of interest" description="Domain III" evidence="1">
    <location>
        <begin position="153"/>
        <end position="204"/>
    </location>
</feature>
<comment type="function">
    <text evidence="1">The RuvA-RuvB-RuvC complex processes Holliday junction (HJ) DNA during genetic recombination and DNA repair, while the RuvA-RuvB complex plays an important role in the rescue of blocked DNA replication forks via replication fork reversal (RFR). RuvA specifically binds to HJ cruciform DNA, conferring on it an open structure. The RuvB hexamer acts as an ATP-dependent pump, pulling dsDNA into and through the RuvAB complex. HJ branch migration allows RuvC to scan DNA until it finds its consensus sequence, where it cleaves and resolves the cruciform DNA.</text>
</comment>
<comment type="subunit">
    <text evidence="1">Homotetramer. Forms an RuvA(8)-RuvB(12)-Holliday junction (HJ) complex. HJ DNA is sandwiched between 2 RuvA tetramers; dsDNA enters through RuvA and exits via RuvB. An RuvB hexamer assembles on each DNA strand where it exits the tetramer. Each RuvB hexamer is contacted by two RuvA subunits (via domain III) on 2 adjacent RuvB subunits; this complex drives branch migration. In the full resolvosome a probable DNA-RuvA(4)-RuvB(12)-RuvC(2) complex forms which resolves the HJ.</text>
</comment>
<comment type="subcellular location">
    <subcellularLocation>
        <location evidence="1">Cytoplasm</location>
    </subcellularLocation>
</comment>
<comment type="domain">
    <text evidence="1">Has three domains with a flexible linker between the domains II and III and assumes an 'L' shape. Domain III is highly mobile and contacts RuvB.</text>
</comment>
<comment type="similarity">
    <text evidence="1">Belongs to the RuvA family.</text>
</comment>
<evidence type="ECO:0000255" key="1">
    <source>
        <dbReference type="HAMAP-Rule" id="MF_00031"/>
    </source>
</evidence>
<sequence length="204" mass="22582">MIGKLSGKADSQGDDYVIIDVNGVGYLVYASGKTLDKLVEGEFYKLFIETHVREEHIHLYGFLTLEEKNFFNLLQSVNGIGTRMALSILSNLTPDDIQIAVNNEDKNIFKAISGVGAKLAERIVLELKDKVTKISSSSAIKDSLNIKNITPVTSNEVMKALINLGFSRFEAQNVVQGIITQNPKISIDELIKTALKNRNSKFFS</sequence>
<keyword id="KW-0963">Cytoplasm</keyword>
<keyword id="KW-0227">DNA damage</keyword>
<keyword id="KW-0233">DNA recombination</keyword>
<keyword id="KW-0234">DNA repair</keyword>
<keyword id="KW-0238">DNA-binding</keyword>
<protein>
    <recommendedName>
        <fullName evidence="1">Holliday junction branch migration complex subunit RuvA</fullName>
    </recommendedName>
</protein>
<reference key="1">
    <citation type="submission" date="2007-09" db="EMBL/GenBank/DDBJ databases">
        <title>Complete genome sequence of Rickettsia canadensis.</title>
        <authorList>
            <person name="Madan A."/>
            <person name="Fahey J."/>
            <person name="Helton E."/>
            <person name="Ketteman M."/>
            <person name="Madan A."/>
            <person name="Rodrigues S."/>
            <person name="Sanchez A."/>
            <person name="Whiting M."/>
            <person name="Dasch G."/>
            <person name="Eremeeva M."/>
        </authorList>
    </citation>
    <scope>NUCLEOTIDE SEQUENCE [LARGE SCALE GENOMIC DNA]</scope>
    <source>
        <strain>McKiel</strain>
    </source>
</reference>
<organism>
    <name type="scientific">Rickettsia canadensis (strain McKiel)</name>
    <dbReference type="NCBI Taxonomy" id="293613"/>
    <lineage>
        <taxon>Bacteria</taxon>
        <taxon>Pseudomonadati</taxon>
        <taxon>Pseudomonadota</taxon>
        <taxon>Alphaproteobacteria</taxon>
        <taxon>Rickettsiales</taxon>
        <taxon>Rickettsiaceae</taxon>
        <taxon>Rickettsieae</taxon>
        <taxon>Rickettsia</taxon>
        <taxon>belli group</taxon>
    </lineage>
</organism>
<gene>
    <name evidence="1" type="primary">ruvA</name>
    <name type="ordered locus">A1E_03475</name>
</gene>
<proteinExistence type="inferred from homology"/>
<name>RUVA_RICCK</name>